<comment type="function">
    <text evidence="1">Produces ATP from ADP in the presence of a proton gradient across the membrane.</text>
</comment>
<comment type="similarity">
    <text evidence="1">Belongs to the V-ATPase E subunit family.</text>
</comment>
<comment type="sequence caution" evidence="2">
    <conflict type="erroneous initiation">
        <sequence resource="EMBL-CDS" id="AAO35583"/>
    </conflict>
</comment>
<gene>
    <name evidence="1" type="primary">atpE1</name>
    <name type="ordered locus">CTC_00996</name>
</gene>
<name>VATE1_CLOTE</name>
<reference key="1">
    <citation type="journal article" date="2003" name="Proc. Natl. Acad. Sci. U.S.A.">
        <title>The genome sequence of Clostridium tetani, the causative agent of tetanus disease.</title>
        <authorList>
            <person name="Brueggemann H."/>
            <person name="Baeumer S."/>
            <person name="Fricke W.F."/>
            <person name="Wiezer A."/>
            <person name="Liesegang H."/>
            <person name="Decker I."/>
            <person name="Herzberg C."/>
            <person name="Martinez-Arias R."/>
            <person name="Merkl R."/>
            <person name="Henne A."/>
            <person name="Gottschalk G."/>
        </authorList>
    </citation>
    <scope>NUCLEOTIDE SEQUENCE [LARGE SCALE GENOMIC DNA]</scope>
    <source>
        <strain>Massachusetts / E88</strain>
    </source>
</reference>
<evidence type="ECO:0000255" key="1">
    <source>
        <dbReference type="HAMAP-Rule" id="MF_00311"/>
    </source>
</evidence>
<evidence type="ECO:0000305" key="2"/>
<keyword id="KW-0066">ATP synthesis</keyword>
<keyword id="KW-0375">Hydrogen ion transport</keyword>
<keyword id="KW-0406">Ion transport</keyword>
<keyword id="KW-1185">Reference proteome</keyword>
<keyword id="KW-0813">Transport</keyword>
<sequence length="198" mass="23049">MSRLENLTSKIIKDSEEKAKIILDEAKREEEKIMLGQKQEGESIKSKIIEKAYLESKNRKERIISNSHLFVRNRKLEAKQEVIDKVYKEALNKLAKLNKEEYLNFIKDSILALEIYGDEEIILSQDEKYINKETIEEINKELKSKGKKGEIKISDKKRDFRGGFILNKDGIEINNTFEALILSLKDDLEPVIIDTLFS</sequence>
<feature type="chain" id="PRO_0000322519" description="V-type ATP synthase subunit E 1">
    <location>
        <begin position="1"/>
        <end position="198"/>
    </location>
</feature>
<dbReference type="EMBL" id="AE015927">
    <property type="protein sequence ID" value="AAO35583.1"/>
    <property type="status" value="ALT_INIT"/>
    <property type="molecule type" value="Genomic_DNA"/>
</dbReference>
<dbReference type="RefSeq" id="WP_035125342.1">
    <property type="nucleotide sequence ID" value="NC_004557.1"/>
</dbReference>
<dbReference type="SMR" id="Q896K7"/>
<dbReference type="STRING" id="212717.CTC_00996"/>
<dbReference type="GeneID" id="24253407"/>
<dbReference type="KEGG" id="ctc:CTC_00996"/>
<dbReference type="HOGENOM" id="CLU_105846_0_0_9"/>
<dbReference type="OrthoDB" id="1749765at2"/>
<dbReference type="Proteomes" id="UP000001412">
    <property type="component" value="Chromosome"/>
</dbReference>
<dbReference type="GO" id="GO:0033178">
    <property type="term" value="C:proton-transporting two-sector ATPase complex, catalytic domain"/>
    <property type="evidence" value="ECO:0007669"/>
    <property type="project" value="InterPro"/>
</dbReference>
<dbReference type="GO" id="GO:0005524">
    <property type="term" value="F:ATP binding"/>
    <property type="evidence" value="ECO:0007669"/>
    <property type="project" value="UniProtKB-UniRule"/>
</dbReference>
<dbReference type="GO" id="GO:0046933">
    <property type="term" value="F:proton-transporting ATP synthase activity, rotational mechanism"/>
    <property type="evidence" value="ECO:0007669"/>
    <property type="project" value="UniProtKB-UniRule"/>
</dbReference>
<dbReference type="GO" id="GO:0046961">
    <property type="term" value="F:proton-transporting ATPase activity, rotational mechanism"/>
    <property type="evidence" value="ECO:0007669"/>
    <property type="project" value="InterPro"/>
</dbReference>
<dbReference type="GO" id="GO:0042777">
    <property type="term" value="P:proton motive force-driven plasma membrane ATP synthesis"/>
    <property type="evidence" value="ECO:0007669"/>
    <property type="project" value="UniProtKB-UniRule"/>
</dbReference>
<dbReference type="Gene3D" id="3.30.2320.30">
    <property type="entry name" value="ATP synthase, E subunit, C-terminal"/>
    <property type="match status" value="1"/>
</dbReference>
<dbReference type="HAMAP" id="MF_00311">
    <property type="entry name" value="ATP_synth_E_arch"/>
    <property type="match status" value="1"/>
</dbReference>
<dbReference type="InterPro" id="IPR038495">
    <property type="entry name" value="ATPase_E_C"/>
</dbReference>
<dbReference type="InterPro" id="IPR002842">
    <property type="entry name" value="ATPase_V1_Esu"/>
</dbReference>
<dbReference type="Pfam" id="PF01991">
    <property type="entry name" value="vATP-synt_E"/>
    <property type="match status" value="1"/>
</dbReference>
<dbReference type="SUPFAM" id="SSF160527">
    <property type="entry name" value="V-type ATPase subunit E-like"/>
    <property type="match status" value="1"/>
</dbReference>
<proteinExistence type="inferred from homology"/>
<protein>
    <recommendedName>
        <fullName>V-type ATP synthase subunit E 1</fullName>
    </recommendedName>
    <alternativeName>
        <fullName evidence="1">V-ATPase subunit E 1</fullName>
    </alternativeName>
</protein>
<organism>
    <name type="scientific">Clostridium tetani (strain Massachusetts / E88)</name>
    <dbReference type="NCBI Taxonomy" id="212717"/>
    <lineage>
        <taxon>Bacteria</taxon>
        <taxon>Bacillati</taxon>
        <taxon>Bacillota</taxon>
        <taxon>Clostridia</taxon>
        <taxon>Eubacteriales</taxon>
        <taxon>Clostridiaceae</taxon>
        <taxon>Clostridium</taxon>
    </lineage>
</organism>
<accession>Q896K7</accession>